<evidence type="ECO:0000250" key="1"/>
<evidence type="ECO:0000250" key="2">
    <source>
        <dbReference type="UniProtKB" id="Q08850"/>
    </source>
</evidence>
<evidence type="ECO:0000250" key="3">
    <source>
        <dbReference type="UniProtKB" id="Q12846"/>
    </source>
</evidence>
<evidence type="ECO:0000255" key="4"/>
<evidence type="ECO:0000255" key="5">
    <source>
        <dbReference type="PROSITE-ProRule" id="PRU00202"/>
    </source>
</evidence>
<evidence type="ECO:0000269" key="6">
    <source>
    </source>
</evidence>
<evidence type="ECO:0000269" key="7">
    <source>
    </source>
</evidence>
<evidence type="ECO:0000269" key="8">
    <source>
    </source>
</evidence>
<evidence type="ECO:0000269" key="9">
    <source>
    </source>
</evidence>
<evidence type="ECO:0000269" key="10">
    <source>
    </source>
</evidence>
<evidence type="ECO:0000269" key="11">
    <source>
    </source>
</evidence>
<evidence type="ECO:0000269" key="12">
    <source>
    </source>
</evidence>
<evidence type="ECO:0000269" key="13">
    <source>
    </source>
</evidence>
<evidence type="ECO:0000269" key="14">
    <source>
    </source>
</evidence>
<evidence type="ECO:0000269" key="15">
    <source>
    </source>
</evidence>
<evidence type="ECO:0000305" key="16"/>
<evidence type="ECO:0007744" key="17">
    <source>
    </source>
</evidence>
<evidence type="ECO:0007744" key="18">
    <source>
    </source>
</evidence>
<evidence type="ECO:0007744" key="19">
    <source>
    </source>
</evidence>
<evidence type="ECO:0007744" key="20">
    <source>
    </source>
</evidence>
<evidence type="ECO:0007829" key="21">
    <source>
        <dbReference type="PDB" id="3PUK"/>
    </source>
</evidence>
<evidence type="ECO:0007829" key="22">
    <source>
        <dbReference type="PDB" id="8BBJ"/>
    </source>
</evidence>
<protein>
    <recommendedName>
        <fullName>Syntaxin-4</fullName>
    </recommendedName>
</protein>
<proteinExistence type="evidence at protein level"/>
<accession>P70452</accession>
<accession>Q3TSL5</accession>
<accession>Q3UKQ8</accession>
<accession>Q80WT8</accession>
<organism>
    <name type="scientific">Mus musculus</name>
    <name type="common">Mouse</name>
    <dbReference type="NCBI Taxonomy" id="10090"/>
    <lineage>
        <taxon>Eukaryota</taxon>
        <taxon>Metazoa</taxon>
        <taxon>Chordata</taxon>
        <taxon>Craniata</taxon>
        <taxon>Vertebrata</taxon>
        <taxon>Euteleostomi</taxon>
        <taxon>Mammalia</taxon>
        <taxon>Eutheria</taxon>
        <taxon>Euarchontoglires</taxon>
        <taxon>Glires</taxon>
        <taxon>Rodentia</taxon>
        <taxon>Myomorpha</taxon>
        <taxon>Muroidea</taxon>
        <taxon>Muridae</taxon>
        <taxon>Murinae</taxon>
        <taxon>Mus</taxon>
        <taxon>Mus</taxon>
    </lineage>
</organism>
<comment type="function">
    <text evidence="2 3 6 11 15">Plasma membrane t-SNARE that mediates docking of transport vesicles. Necessary for the translocation of SLC2A4 from intracellular vesicles to the plasma membrane. In neurons, recruited at neurite tips to membrane domains rich in the phospholipid 1-oleoyl-2-palmitoyl-PC (OPPC) which promotes neurite tip surface expression of the dopamine transporter SLC6A3/DAT by facilitating fusion of SLC6A3-containing transport vesicles with the plasma membrane (By similarity). Together with STXB3 and VAMP2, may also play a role in docking/fusion of intracellular GLUT4-containing vesicles with the cell surface in adipocytes and in docking of synaptic vesicles at presynaptic active zones. Required for normal hearing (By similarity).</text>
</comment>
<comment type="subunit">
    <text evidence="1 6 7 8 9 10 11 12 13 15">Interacts with STXBP6. Component of the SNARE complex composed of STX4, SNAP23 and VAMP7 that interacts with SYT7 during lysosomal exocytosis (By similarity). Found in a complex with VAMP8 and SNAP23. Detected in a complex with SNAP23 and STXBP4. Interacts with VAMP2. Interacts with SNAP23 and SNAPIN. Interacts with LLGL1. Interacts (via C-terminus) with CENPF. Interacts with DOC2B. Interacts with STXBP3; excludes interaction with DOC2B and SNAP25. Interacts with STXBP4; excludes interaction with VAMP2. Interacts with STXBP5L.</text>
</comment>
<comment type="interaction">
    <interactant intactId="EBI-645716">
        <id>P70452</id>
    </interactant>
    <interactant intactId="EBI-2211248">
        <id>Q155P7</id>
        <label>Cenpf</label>
    </interactant>
    <organismsDiffer>false</organismsDiffer>
    <experiments>9</experiments>
</comment>
<comment type="interaction">
    <interactant intactId="EBI-645716">
        <id>P70452</id>
    </interactant>
    <interactant intactId="EBI-15639434">
        <id>Q60770-1</id>
        <label>Stxbp3</label>
    </interactant>
    <organismsDiffer>false</organismsDiffer>
    <experiments>3</experiments>
</comment>
<comment type="interaction">
    <interactant intactId="EBI-645716">
        <id>P70452</id>
    </interactant>
    <interactant intactId="EBI-1029097">
        <id>P61765</id>
        <label>Stxbp1</label>
    </interactant>
    <organismsDiffer>true</organismsDiffer>
    <experiments>2</experiments>
</comment>
<comment type="subcellular location">
    <subcellularLocation>
        <location evidence="2">Cell membrane</location>
        <topology evidence="16">Single-pass type IV membrane protein</topology>
    </subcellularLocation>
    <subcellularLocation>
        <location evidence="2">Cell projection</location>
        <location evidence="2">Neuron projection</location>
    </subcellularLocation>
    <subcellularLocation>
        <location evidence="14">Cell projection</location>
        <location evidence="14">Stereocilium</location>
    </subcellularLocation>
    <text evidence="2">Localizes to neurite tips in neuronal cells.</text>
</comment>
<comment type="tissue specificity">
    <text evidence="14">Expressed in the outer and inner hair cells of the cochlea.</text>
</comment>
<comment type="similarity">
    <text evidence="16">Belongs to the syntaxin family.</text>
</comment>
<name>STX4_MOUSE</name>
<gene>
    <name type="primary">Stx4</name>
    <name type="synonym">Stx4a</name>
</gene>
<sequence length="298" mass="34165">MRDRTHELRQGDNISDDEDEVRVALVVHSGAARLGSPDDEFFQKVQTIRQTMAKLESKVRELEKQQVTILATPLPEESMKQGLQNLREEIKQLGREVRAQLKAIEPQKEEADENYNSVNTRMKKTQHGVLSQQFVELINKCNSMQSEYREKNVERIRRQLKITNAGMVSDEELEQMLDSGQSEVFVSNILKDTQVTRQALNEISARHSEIQQLERSIRELHEIFTFLATEVEMQGEMINRIEKNILSSADYVERGQEHVKIALENQKKARKKKVMIAICVSVTVLILAVIIGITITVG</sequence>
<reference key="1">
    <citation type="journal article" date="1997" name="J. Biol. Chem.">
        <title>Characterization of Munc-18c and syntaxin-4 in 3T3-L1 adipocytes. Putative role in insulin-dependent movement of GLUT-4.</title>
        <authorList>
            <person name="Tellam J.T."/>
            <person name="Macaulay S.L."/>
            <person name="McIntosh S."/>
            <person name="Hewish D.R."/>
            <person name="Ward C.W."/>
            <person name="James D.E."/>
        </authorList>
    </citation>
    <scope>NUCLEOTIDE SEQUENCE [MRNA]</scope>
    <scope>FUNCTION</scope>
    <scope>INTERACTION WITH STXB3</scope>
    <scope>SUBCELLULAR LOCATION</scope>
    <source>
        <tissue>Adipocyte</tissue>
    </source>
</reference>
<reference key="2">
    <citation type="journal article" date="2005" name="Science">
        <title>The transcriptional landscape of the mammalian genome.</title>
        <authorList>
            <person name="Carninci P."/>
            <person name="Kasukawa T."/>
            <person name="Katayama S."/>
            <person name="Gough J."/>
            <person name="Frith M.C."/>
            <person name="Maeda N."/>
            <person name="Oyama R."/>
            <person name="Ravasi T."/>
            <person name="Lenhard B."/>
            <person name="Wells C."/>
            <person name="Kodzius R."/>
            <person name="Shimokawa K."/>
            <person name="Bajic V.B."/>
            <person name="Brenner S.E."/>
            <person name="Batalov S."/>
            <person name="Forrest A.R."/>
            <person name="Zavolan M."/>
            <person name="Davis M.J."/>
            <person name="Wilming L.G."/>
            <person name="Aidinis V."/>
            <person name="Allen J.E."/>
            <person name="Ambesi-Impiombato A."/>
            <person name="Apweiler R."/>
            <person name="Aturaliya R.N."/>
            <person name="Bailey T.L."/>
            <person name="Bansal M."/>
            <person name="Baxter L."/>
            <person name="Beisel K.W."/>
            <person name="Bersano T."/>
            <person name="Bono H."/>
            <person name="Chalk A.M."/>
            <person name="Chiu K.P."/>
            <person name="Choudhary V."/>
            <person name="Christoffels A."/>
            <person name="Clutterbuck D.R."/>
            <person name="Crowe M.L."/>
            <person name="Dalla E."/>
            <person name="Dalrymple B.P."/>
            <person name="de Bono B."/>
            <person name="Della Gatta G."/>
            <person name="di Bernardo D."/>
            <person name="Down T."/>
            <person name="Engstrom P."/>
            <person name="Fagiolini M."/>
            <person name="Faulkner G."/>
            <person name="Fletcher C.F."/>
            <person name="Fukushima T."/>
            <person name="Furuno M."/>
            <person name="Futaki S."/>
            <person name="Gariboldi M."/>
            <person name="Georgii-Hemming P."/>
            <person name="Gingeras T.R."/>
            <person name="Gojobori T."/>
            <person name="Green R.E."/>
            <person name="Gustincich S."/>
            <person name="Harbers M."/>
            <person name="Hayashi Y."/>
            <person name="Hensch T.K."/>
            <person name="Hirokawa N."/>
            <person name="Hill D."/>
            <person name="Huminiecki L."/>
            <person name="Iacono M."/>
            <person name="Ikeo K."/>
            <person name="Iwama A."/>
            <person name="Ishikawa T."/>
            <person name="Jakt M."/>
            <person name="Kanapin A."/>
            <person name="Katoh M."/>
            <person name="Kawasawa Y."/>
            <person name="Kelso J."/>
            <person name="Kitamura H."/>
            <person name="Kitano H."/>
            <person name="Kollias G."/>
            <person name="Krishnan S.P."/>
            <person name="Kruger A."/>
            <person name="Kummerfeld S.K."/>
            <person name="Kurochkin I.V."/>
            <person name="Lareau L.F."/>
            <person name="Lazarevic D."/>
            <person name="Lipovich L."/>
            <person name="Liu J."/>
            <person name="Liuni S."/>
            <person name="McWilliam S."/>
            <person name="Madan Babu M."/>
            <person name="Madera M."/>
            <person name="Marchionni L."/>
            <person name="Matsuda H."/>
            <person name="Matsuzawa S."/>
            <person name="Miki H."/>
            <person name="Mignone F."/>
            <person name="Miyake S."/>
            <person name="Morris K."/>
            <person name="Mottagui-Tabar S."/>
            <person name="Mulder N."/>
            <person name="Nakano N."/>
            <person name="Nakauchi H."/>
            <person name="Ng P."/>
            <person name="Nilsson R."/>
            <person name="Nishiguchi S."/>
            <person name="Nishikawa S."/>
            <person name="Nori F."/>
            <person name="Ohara O."/>
            <person name="Okazaki Y."/>
            <person name="Orlando V."/>
            <person name="Pang K.C."/>
            <person name="Pavan W.J."/>
            <person name="Pavesi G."/>
            <person name="Pesole G."/>
            <person name="Petrovsky N."/>
            <person name="Piazza S."/>
            <person name="Reed J."/>
            <person name="Reid J.F."/>
            <person name="Ring B.Z."/>
            <person name="Ringwald M."/>
            <person name="Rost B."/>
            <person name="Ruan Y."/>
            <person name="Salzberg S.L."/>
            <person name="Sandelin A."/>
            <person name="Schneider C."/>
            <person name="Schoenbach C."/>
            <person name="Sekiguchi K."/>
            <person name="Semple C.A."/>
            <person name="Seno S."/>
            <person name="Sessa L."/>
            <person name="Sheng Y."/>
            <person name="Shibata Y."/>
            <person name="Shimada H."/>
            <person name="Shimada K."/>
            <person name="Silva D."/>
            <person name="Sinclair B."/>
            <person name="Sperling S."/>
            <person name="Stupka E."/>
            <person name="Sugiura K."/>
            <person name="Sultana R."/>
            <person name="Takenaka Y."/>
            <person name="Taki K."/>
            <person name="Tammoja K."/>
            <person name="Tan S.L."/>
            <person name="Tang S."/>
            <person name="Taylor M.S."/>
            <person name="Tegner J."/>
            <person name="Teichmann S.A."/>
            <person name="Ueda H.R."/>
            <person name="van Nimwegen E."/>
            <person name="Verardo R."/>
            <person name="Wei C.L."/>
            <person name="Yagi K."/>
            <person name="Yamanishi H."/>
            <person name="Zabarovsky E."/>
            <person name="Zhu S."/>
            <person name="Zimmer A."/>
            <person name="Hide W."/>
            <person name="Bult C."/>
            <person name="Grimmond S.M."/>
            <person name="Teasdale R.D."/>
            <person name="Liu E.T."/>
            <person name="Brusic V."/>
            <person name="Quackenbush J."/>
            <person name="Wahlestedt C."/>
            <person name="Mattick J.S."/>
            <person name="Hume D.A."/>
            <person name="Kai C."/>
            <person name="Sasaki D."/>
            <person name="Tomaru Y."/>
            <person name="Fukuda S."/>
            <person name="Kanamori-Katayama M."/>
            <person name="Suzuki M."/>
            <person name="Aoki J."/>
            <person name="Arakawa T."/>
            <person name="Iida J."/>
            <person name="Imamura K."/>
            <person name="Itoh M."/>
            <person name="Kato T."/>
            <person name="Kawaji H."/>
            <person name="Kawagashira N."/>
            <person name="Kawashima T."/>
            <person name="Kojima M."/>
            <person name="Kondo S."/>
            <person name="Konno H."/>
            <person name="Nakano K."/>
            <person name="Ninomiya N."/>
            <person name="Nishio T."/>
            <person name="Okada M."/>
            <person name="Plessy C."/>
            <person name="Shibata K."/>
            <person name="Shiraki T."/>
            <person name="Suzuki S."/>
            <person name="Tagami M."/>
            <person name="Waki K."/>
            <person name="Watahiki A."/>
            <person name="Okamura-Oho Y."/>
            <person name="Suzuki H."/>
            <person name="Kawai J."/>
            <person name="Hayashizaki Y."/>
        </authorList>
    </citation>
    <scope>NUCLEOTIDE SEQUENCE [LARGE SCALE MRNA]</scope>
    <source>
        <strain>C57BL/6J</strain>
        <tissue>Olfactory bulb</tissue>
        <tissue>Placenta</tissue>
    </source>
</reference>
<reference key="3">
    <citation type="journal article" date="2004" name="Genome Res.">
        <title>The status, quality, and expansion of the NIH full-length cDNA project: the Mammalian Gene Collection (MGC).</title>
        <authorList>
            <consortium name="The MGC Project Team"/>
        </authorList>
    </citation>
    <scope>NUCLEOTIDE SEQUENCE [LARGE SCALE MRNA]</scope>
    <source>
        <strain>C57BL/6J</strain>
        <strain>Czech II</strain>
        <strain>FVB/N</strain>
        <tissue>Brain</tissue>
        <tissue>Mammary gland</tissue>
    </source>
</reference>
<reference key="4">
    <citation type="journal article" date="1999" name="Mol. Cell">
        <title>Synip: a novel insulin-regulated syntaxin 4-binding protein mediating GLUT4 translocation in adipocytes.</title>
        <authorList>
            <person name="Min J."/>
            <person name="Okada S."/>
            <person name="Kanzaki M."/>
            <person name="Elmendorf J.S."/>
            <person name="Coker K.J."/>
            <person name="Ceresa B.P."/>
            <person name="Syu L.-J."/>
            <person name="Noda Y."/>
            <person name="Saltiel A.R."/>
            <person name="Pessin J.E."/>
        </authorList>
    </citation>
    <scope>FUNCTION</scope>
    <scope>INTERACTION WITH STXBP4; SNAP23 AND VAMP2</scope>
</reference>
<reference key="5">
    <citation type="journal article" date="2003" name="Biochem. J.">
        <title>Identification and characterization of Snapin as a ubiquitously expressed SNARE-binding protein that interacts with SNAP23 in non-neuronal cells.</title>
        <authorList>
            <person name="Buxton P."/>
            <person name="Zhang X.-M."/>
            <person name="Walsh B."/>
            <person name="Sriratana A."/>
            <person name="Schenberg I."/>
            <person name="Manickam E."/>
            <person name="Rowe T."/>
        </authorList>
    </citation>
    <scope>INTERACTION WITH SNAP23 AND SNAPIN</scope>
</reference>
<reference key="6">
    <citation type="journal article" date="2004" name="Dev. Cell">
        <title>A role of VAMP8/endobrevin in regulated exocytosis of pancreatic acinar cells.</title>
        <authorList>
            <person name="Wang C.-C."/>
            <person name="Ng C.P."/>
            <person name="Lu L."/>
            <person name="Atlashkin V."/>
            <person name="Zhang W."/>
            <person name="Seet L.-F."/>
            <person name="Hong W."/>
        </authorList>
    </citation>
    <scope>IDENTIFICATION IN A COMPLEX WITH VAMP8 AND SNAP23</scope>
</reference>
<reference key="7">
    <citation type="journal article" date="2002" name="Mol. Biol. Cell">
        <title>Mammalian homolog of Drosophila tumor suppressor lethal (2) giant larvae interacts with basolateral exocytic machinery in Madin-Darby canine kidney cells.</title>
        <authorList>
            <person name="Musch A."/>
            <person name="Cohen D."/>
            <person name="Yeaman C."/>
            <person name="Nelson W.J."/>
            <person name="Rodriguez-Boulan E."/>
            <person name="Brennwald P.J."/>
        </authorList>
    </citation>
    <scope>INTERACTION WITH LLGL1</scope>
</reference>
<reference key="8">
    <citation type="journal article" date="2007" name="J. Biol. Chem.">
        <title>Doc2beta is a novel Munc18c-interacting partner and positive effector of syntaxin 4-mediated exocytosis.</title>
        <authorList>
            <person name="Ke B."/>
            <person name="Oh E."/>
            <person name="Thurmond D.C."/>
        </authorList>
    </citation>
    <scope>INTERACTION WITH STXBP3 AND VAMP2</scope>
</reference>
<reference key="9">
    <citation type="journal article" date="2007" name="Proc. Natl. Acad. Sci. U.S.A.">
        <title>Large-scale phosphorylation analysis of mouse liver.</title>
        <authorList>
            <person name="Villen J."/>
            <person name="Beausoleil S.A."/>
            <person name="Gerber S.A."/>
            <person name="Gygi S.P."/>
        </authorList>
    </citation>
    <scope>PHOSPHORYLATION [LARGE SCALE ANALYSIS] AT SER-15</scope>
    <scope>IDENTIFICATION BY MASS SPECTROMETRY [LARGE SCALE ANALYSIS]</scope>
    <source>
        <tissue>Liver</tissue>
    </source>
</reference>
<reference key="10">
    <citation type="journal article" date="2008" name="J. Cell Sci.">
        <title>Murine CENPF interacts with syntaxin 4 in the regulation of vesicular transport.</title>
        <authorList>
            <person name="Pooley R.D."/>
            <person name="Moynihan K.L."/>
            <person name="Soukoulis V."/>
            <person name="Reddy S."/>
            <person name="Francis R."/>
            <person name="Lo C."/>
            <person name="Ma L.-J."/>
            <person name="Bader D.M."/>
        </authorList>
    </citation>
    <scope>FUNCTION</scope>
    <scope>INTERACTION WITH CENPF</scope>
    <scope>SUBCELLULAR LOCATION</scope>
</reference>
<reference key="11">
    <citation type="journal article" date="2009" name="Diabetes">
        <title>DOC2B: a novel syntaxin-4 binding protein mediating insulin-regulated GLUT4 vesicle fusion in adipocytes.</title>
        <authorList>
            <person name="Fukuda N."/>
            <person name="Emoto M."/>
            <person name="Nakamori Y."/>
            <person name="Taguchi A."/>
            <person name="Miyamoto S."/>
            <person name="Uraki S."/>
            <person name="Oka Y."/>
            <person name="Tanizawa Y."/>
        </authorList>
    </citation>
    <scope>INTERACTION WITH DOC2B</scope>
</reference>
<reference key="12">
    <citation type="journal article" date="2009" name="Immunity">
        <title>The phagosomal proteome in interferon-gamma-activated macrophages.</title>
        <authorList>
            <person name="Trost M."/>
            <person name="English L."/>
            <person name="Lemieux S."/>
            <person name="Courcelles M."/>
            <person name="Desjardins M."/>
            <person name="Thibault P."/>
        </authorList>
    </citation>
    <scope>PHOSPHORYLATION [LARGE SCALE ANALYSIS] AT SER-15; SER-29 AND SER-248</scope>
    <scope>IDENTIFICATION BY MASS SPECTROMETRY [LARGE SCALE ANALYSIS]</scope>
</reference>
<reference key="13">
    <citation type="journal article" date="2009" name="Mol. Cell. Proteomics">
        <title>Large scale localization of protein phosphorylation by use of electron capture dissociation mass spectrometry.</title>
        <authorList>
            <person name="Sweet S.M."/>
            <person name="Bailey C.M."/>
            <person name="Cunningham D.L."/>
            <person name="Heath J.K."/>
            <person name="Cooper H.J."/>
        </authorList>
    </citation>
    <scope>PHOSPHORYLATION [LARGE SCALE ANALYSIS] AT SER-117</scope>
    <scope>IDENTIFICATION BY MASS SPECTROMETRY [LARGE SCALE ANALYSIS]</scope>
    <source>
        <tissue>Embryonic fibroblast</tissue>
    </source>
</reference>
<reference key="14">
    <citation type="journal article" date="2010" name="Cell">
        <title>A tissue-specific atlas of mouse protein phosphorylation and expression.</title>
        <authorList>
            <person name="Huttlin E.L."/>
            <person name="Jedrychowski M.P."/>
            <person name="Elias J.E."/>
            <person name="Goswami T."/>
            <person name="Rad R."/>
            <person name="Beausoleil S.A."/>
            <person name="Villen J."/>
            <person name="Haas W."/>
            <person name="Sowa M.E."/>
            <person name="Gygi S.P."/>
        </authorList>
    </citation>
    <scope>PHOSPHORYLATION [LARGE SCALE ANALYSIS] AT SER-15; SER-117 AND SER-208</scope>
    <scope>IDENTIFICATION BY MASS SPECTROMETRY [LARGE SCALE ANALYSIS]</scope>
    <source>
        <tissue>Brain</tissue>
        <tissue>Brown adipose tissue</tissue>
        <tissue>Heart</tissue>
        <tissue>Kidney</tissue>
        <tissue>Liver</tissue>
        <tissue>Lung</tissue>
        <tissue>Spleen</tissue>
        <tissue>Testis</tissue>
    </source>
</reference>
<reference key="15">
    <citation type="journal article" date="2011" name="PLoS Genet.">
        <title>Positional cloning of a type 2 diabetes quantitative trait locus; tomosyn-2, a negative regulator of insulin secretion.</title>
        <authorList>
            <person name="Bhatnagar S."/>
            <person name="Oler A.T."/>
            <person name="Rabaglia M.E."/>
            <person name="Stapleton D.S."/>
            <person name="Schueler K.L."/>
            <person name="Truchan N.A."/>
            <person name="Worzella S.L."/>
            <person name="Stoehr J.P."/>
            <person name="Clee S.M."/>
            <person name="Yandell B.S."/>
            <person name="Keller M.P."/>
            <person name="Thurmond D.C."/>
            <person name="Attie A.D."/>
        </authorList>
    </citation>
    <scope>INTERACTION WITH STXBP5L</scope>
</reference>
<reference key="16">
    <citation type="journal article" date="2023" name="Hum. Mol. Genet.">
        <title>Syntaxin 4 is essential for hearing in human and zebrafish.</title>
        <authorList>
            <person name="Schrauwen I."/>
            <person name="Ghaffar A."/>
            <person name="Bharadwaj T."/>
            <person name="Shah K."/>
            <person name="Rehman S."/>
            <person name="Acharya A."/>
            <person name="Liaqat K."/>
            <person name="Lin N.S."/>
            <person name="Everard J.L."/>
            <person name="Khan A."/>
            <person name="Ahmed Z.M."/>
            <person name="Ahmad W."/>
            <person name="Riazuddin S."/>
            <person name="Leal S.M."/>
        </authorList>
    </citation>
    <scope>TISSUE SPECIFICITY</scope>
    <scope>SUBCELLULAR LOCATION</scope>
</reference>
<feature type="chain" id="PRO_0000210203" description="Syntaxin-4">
    <location>
        <begin position="1"/>
        <end position="298"/>
    </location>
</feature>
<feature type="topological domain" description="Cytoplasmic" evidence="4">
    <location>
        <begin position="1"/>
        <end position="274"/>
    </location>
</feature>
<feature type="transmembrane region" description="Helical; Anchor for type IV membrane protein" evidence="4">
    <location>
        <begin position="275"/>
        <end position="295"/>
    </location>
</feature>
<feature type="topological domain" description="Extracellular" evidence="4">
    <location>
        <begin position="296"/>
        <end position="298"/>
    </location>
</feature>
<feature type="domain" description="t-SNARE coiled-coil homology" evidence="5">
    <location>
        <begin position="200"/>
        <end position="262"/>
    </location>
</feature>
<feature type="region of interest" description="Interaction with CENPF" evidence="11">
    <location>
        <begin position="154"/>
        <end position="298"/>
    </location>
</feature>
<feature type="coiled-coil region" evidence="4">
    <location>
        <begin position="38"/>
        <end position="163"/>
    </location>
</feature>
<feature type="site" description="Required for neurite tip localization" evidence="2">
    <location>
        <position position="290"/>
    </location>
</feature>
<feature type="modified residue" description="Phosphoserine" evidence="17 19 20">
    <location>
        <position position="15"/>
    </location>
</feature>
<feature type="modified residue" description="Phosphoserine" evidence="19">
    <location>
        <position position="29"/>
    </location>
</feature>
<feature type="modified residue" description="Phosphoserine" evidence="3">
    <location>
        <position position="36"/>
    </location>
</feature>
<feature type="modified residue" description="Phosphoserine" evidence="18 20">
    <location>
        <position position="117"/>
    </location>
</feature>
<feature type="modified residue" description="Phosphoserine" evidence="20">
    <location>
        <position position="208"/>
    </location>
</feature>
<feature type="modified residue" description="Phosphoserine" evidence="19">
    <location>
        <position position="248"/>
    </location>
</feature>
<feature type="sequence conflict" description="In Ref. 3; AAH52023." evidence="16" ref="3">
    <original>T</original>
    <variation>I</variation>
    <location>
        <position position="47"/>
    </location>
</feature>
<feature type="sequence conflict" description="In Ref. 2; BAE36660." evidence="16" ref="2">
    <original>C</original>
    <variation>Y</variation>
    <location>
        <position position="141"/>
    </location>
</feature>
<feature type="sequence conflict" description="In Ref. 2; BAE26743." evidence="16" ref="2">
    <original>S</original>
    <variation>Y</variation>
    <location>
        <position position="281"/>
    </location>
</feature>
<feature type="helix" evidence="21">
    <location>
        <begin position="5"/>
        <end position="8"/>
    </location>
</feature>
<feature type="helix" evidence="22">
    <location>
        <begin position="86"/>
        <end position="103"/>
    </location>
</feature>
<keyword id="KW-0002">3D-structure</keyword>
<keyword id="KW-1003">Cell membrane</keyword>
<keyword id="KW-0966">Cell projection</keyword>
<keyword id="KW-0175">Coiled coil</keyword>
<keyword id="KW-1009">Hearing</keyword>
<keyword id="KW-0472">Membrane</keyword>
<keyword id="KW-0532">Neurotransmitter transport</keyword>
<keyword id="KW-0597">Phosphoprotein</keyword>
<keyword id="KW-1185">Reference proteome</keyword>
<keyword id="KW-0812">Transmembrane</keyword>
<keyword id="KW-1133">Transmembrane helix</keyword>
<keyword id="KW-0813">Transport</keyword>
<dbReference type="EMBL" id="U76832">
    <property type="protein sequence ID" value="AAB18991.1"/>
    <property type="molecule type" value="mRNA"/>
</dbReference>
<dbReference type="EMBL" id="AK145909">
    <property type="protein sequence ID" value="BAE26743.1"/>
    <property type="molecule type" value="mRNA"/>
</dbReference>
<dbReference type="EMBL" id="AK161971">
    <property type="protein sequence ID" value="BAE36660.1"/>
    <property type="molecule type" value="mRNA"/>
</dbReference>
<dbReference type="EMBL" id="BC005791">
    <property type="protein sequence ID" value="AAH05791.1"/>
    <property type="molecule type" value="mRNA"/>
</dbReference>
<dbReference type="EMBL" id="BC011491">
    <property type="protein sequence ID" value="AAH11491.1"/>
    <property type="molecule type" value="mRNA"/>
</dbReference>
<dbReference type="EMBL" id="BC052023">
    <property type="protein sequence ID" value="AAH52023.1"/>
    <property type="molecule type" value="mRNA"/>
</dbReference>
<dbReference type="CCDS" id="CCDS21880.1"/>
<dbReference type="RefSeq" id="NP_033320.1">
    <property type="nucleotide sequence ID" value="NM_009294.3"/>
</dbReference>
<dbReference type="PDB" id="3PUJ">
    <property type="method" value="X-ray"/>
    <property type="resolution" value="3.31 A"/>
    <property type="chains" value="C/D=1-10"/>
</dbReference>
<dbReference type="PDB" id="3PUK">
    <property type="method" value="X-ray"/>
    <property type="resolution" value="3.05 A"/>
    <property type="chains" value="C/D=1-10"/>
</dbReference>
<dbReference type="PDB" id="8BBJ">
    <property type="method" value="X-ray"/>
    <property type="resolution" value="2.65 A"/>
    <property type="chains" value="A/B=87-109"/>
</dbReference>
<dbReference type="PDBsum" id="3PUJ"/>
<dbReference type="PDBsum" id="3PUK"/>
<dbReference type="PDBsum" id="8BBJ"/>
<dbReference type="SMR" id="P70452"/>
<dbReference type="BioGRID" id="203563">
    <property type="interactions" value="15"/>
</dbReference>
<dbReference type="CORUM" id="P70452"/>
<dbReference type="DIP" id="DIP-41399N"/>
<dbReference type="FunCoup" id="P70452">
    <property type="interactions" value="544"/>
</dbReference>
<dbReference type="IntAct" id="P70452">
    <property type="interactions" value="7"/>
</dbReference>
<dbReference type="MINT" id="P70452"/>
<dbReference type="STRING" id="10090.ENSMUSP00000033075"/>
<dbReference type="iPTMnet" id="P70452"/>
<dbReference type="PhosphoSitePlus" id="P70452"/>
<dbReference type="SwissPalm" id="P70452"/>
<dbReference type="jPOST" id="P70452"/>
<dbReference type="PaxDb" id="10090-ENSMUSP00000033075"/>
<dbReference type="PeptideAtlas" id="P70452"/>
<dbReference type="ProteomicsDB" id="257472"/>
<dbReference type="Pumba" id="P70452"/>
<dbReference type="Antibodypedia" id="732">
    <property type="antibodies" value="290 antibodies from 32 providers"/>
</dbReference>
<dbReference type="DNASU" id="20909"/>
<dbReference type="Ensembl" id="ENSMUST00000033075.14">
    <property type="protein sequence ID" value="ENSMUSP00000033075.8"/>
    <property type="gene ID" value="ENSMUSG00000030805.15"/>
</dbReference>
<dbReference type="Ensembl" id="ENSMUST00000121705.8">
    <property type="protein sequence ID" value="ENSMUSP00000112927.2"/>
    <property type="gene ID" value="ENSMUSG00000030805.15"/>
</dbReference>
<dbReference type="GeneID" id="20909"/>
<dbReference type="KEGG" id="mmu:20909"/>
<dbReference type="UCSC" id="uc009jwy.1">
    <property type="organism name" value="mouse"/>
</dbReference>
<dbReference type="AGR" id="MGI:893577"/>
<dbReference type="CTD" id="20909"/>
<dbReference type="MGI" id="MGI:893577">
    <property type="gene designation" value="Stx4a"/>
</dbReference>
<dbReference type="VEuPathDB" id="HostDB:ENSMUSG00000030805"/>
<dbReference type="eggNOG" id="KOG0810">
    <property type="taxonomic scope" value="Eukaryota"/>
</dbReference>
<dbReference type="GeneTree" id="ENSGT01030000234627"/>
<dbReference type="HOGENOM" id="CLU_042423_2_1_1"/>
<dbReference type="InParanoid" id="P70452"/>
<dbReference type="OMA" id="WIAICCA"/>
<dbReference type="OrthoDB" id="10255013at2759"/>
<dbReference type="PhylomeDB" id="P70452"/>
<dbReference type="TreeFam" id="TF313763"/>
<dbReference type="Reactome" id="R-MMU-114516">
    <property type="pathway name" value="Disinhibition of SNARE formation"/>
</dbReference>
<dbReference type="Reactome" id="R-MMU-1236974">
    <property type="pathway name" value="ER-Phagosome pathway"/>
</dbReference>
<dbReference type="Reactome" id="R-MMU-199992">
    <property type="pathway name" value="trans-Golgi Network Vesicle Budding"/>
</dbReference>
<dbReference type="Reactome" id="R-MMU-449836">
    <property type="pathway name" value="Other interleukin signaling"/>
</dbReference>
<dbReference type="BioGRID-ORCS" id="20909">
    <property type="hits" value="13 hits in 78 CRISPR screens"/>
</dbReference>
<dbReference type="ChiTaRS" id="Stx4a">
    <property type="organism name" value="mouse"/>
</dbReference>
<dbReference type="EvolutionaryTrace" id="P70452"/>
<dbReference type="PRO" id="PR:P70452"/>
<dbReference type="Proteomes" id="UP000000589">
    <property type="component" value="Chromosome 7"/>
</dbReference>
<dbReference type="RNAct" id="P70452">
    <property type="molecule type" value="protein"/>
</dbReference>
<dbReference type="Bgee" id="ENSMUSG00000030805">
    <property type="expression patterns" value="Expressed in ileal epithelium and 270 other cell types or tissues"/>
</dbReference>
<dbReference type="ExpressionAtlas" id="P70452">
    <property type="expression patterns" value="baseline and differential"/>
</dbReference>
<dbReference type="GO" id="GO:0016323">
    <property type="term" value="C:basolateral plasma membrane"/>
    <property type="evidence" value="ECO:0000314"/>
    <property type="project" value="MGI"/>
</dbReference>
<dbReference type="GO" id="GO:0009986">
    <property type="term" value="C:cell surface"/>
    <property type="evidence" value="ECO:0000314"/>
    <property type="project" value="BHF-UCL"/>
</dbReference>
<dbReference type="GO" id="GO:0005737">
    <property type="term" value="C:cytoplasm"/>
    <property type="evidence" value="ECO:0000314"/>
    <property type="project" value="MGI"/>
</dbReference>
<dbReference type="GO" id="GO:0043197">
    <property type="term" value="C:dendritic spine"/>
    <property type="evidence" value="ECO:0007669"/>
    <property type="project" value="Ensembl"/>
</dbReference>
<dbReference type="GO" id="GO:0005768">
    <property type="term" value="C:endosome"/>
    <property type="evidence" value="ECO:0007669"/>
    <property type="project" value="Ensembl"/>
</dbReference>
<dbReference type="GO" id="GO:0005615">
    <property type="term" value="C:extracellular space"/>
    <property type="evidence" value="ECO:0007669"/>
    <property type="project" value="Ensembl"/>
</dbReference>
<dbReference type="GO" id="GO:0098978">
    <property type="term" value="C:glutamatergic synapse"/>
    <property type="evidence" value="ECO:0000314"/>
    <property type="project" value="SynGO"/>
</dbReference>
<dbReference type="GO" id="GO:0030027">
    <property type="term" value="C:lamellipodium"/>
    <property type="evidence" value="ECO:0007669"/>
    <property type="project" value="Ensembl"/>
</dbReference>
<dbReference type="GO" id="GO:0043219">
    <property type="term" value="C:lateral loop"/>
    <property type="evidence" value="ECO:0000314"/>
    <property type="project" value="BHF-UCL"/>
</dbReference>
<dbReference type="GO" id="GO:0035749">
    <property type="term" value="C:myelin sheath adaxonal region"/>
    <property type="evidence" value="ECO:0000314"/>
    <property type="project" value="BHF-UCL"/>
</dbReference>
<dbReference type="GO" id="GO:0032589">
    <property type="term" value="C:neuron projection membrane"/>
    <property type="evidence" value="ECO:0000250"/>
    <property type="project" value="UniProtKB"/>
</dbReference>
<dbReference type="GO" id="GO:0048471">
    <property type="term" value="C:perinuclear region of cytoplasm"/>
    <property type="evidence" value="ECO:0000314"/>
    <property type="project" value="UniProtKB"/>
</dbReference>
<dbReference type="GO" id="GO:0045335">
    <property type="term" value="C:phagocytic vesicle"/>
    <property type="evidence" value="ECO:0000314"/>
    <property type="project" value="MGI"/>
</dbReference>
<dbReference type="GO" id="GO:0005886">
    <property type="term" value="C:plasma membrane"/>
    <property type="evidence" value="ECO:0000314"/>
    <property type="project" value="MGI"/>
</dbReference>
<dbReference type="GO" id="GO:0098794">
    <property type="term" value="C:postsynapse"/>
    <property type="evidence" value="ECO:0000314"/>
    <property type="project" value="SynGO"/>
</dbReference>
<dbReference type="GO" id="GO:0098793">
    <property type="term" value="C:presynapse"/>
    <property type="evidence" value="ECO:0007669"/>
    <property type="project" value="GOC"/>
</dbReference>
<dbReference type="GO" id="GO:0098685">
    <property type="term" value="C:Schaffer collateral - CA1 synapse"/>
    <property type="evidence" value="ECO:0000314"/>
    <property type="project" value="SynGO"/>
</dbReference>
<dbReference type="GO" id="GO:0031201">
    <property type="term" value="C:SNARE complex"/>
    <property type="evidence" value="ECO:0000314"/>
    <property type="project" value="MGI"/>
</dbReference>
<dbReference type="GO" id="GO:0042581">
    <property type="term" value="C:specific granule"/>
    <property type="evidence" value="ECO:0007669"/>
    <property type="project" value="Ensembl"/>
</dbReference>
<dbReference type="GO" id="GO:0032420">
    <property type="term" value="C:stereocilium"/>
    <property type="evidence" value="ECO:0000314"/>
    <property type="project" value="UniProtKB"/>
</dbReference>
<dbReference type="GO" id="GO:0000322">
    <property type="term" value="C:storage vacuole"/>
    <property type="evidence" value="ECO:0000314"/>
    <property type="project" value="MGI"/>
</dbReference>
<dbReference type="GO" id="GO:0005802">
    <property type="term" value="C:trans-Golgi network"/>
    <property type="evidence" value="ECO:0000314"/>
    <property type="project" value="UniProtKB"/>
</dbReference>
<dbReference type="GO" id="GO:0005484">
    <property type="term" value="F:SNAP receptor activity"/>
    <property type="evidence" value="ECO:0007669"/>
    <property type="project" value="InterPro"/>
</dbReference>
<dbReference type="GO" id="GO:0000149">
    <property type="term" value="F:SNARE binding"/>
    <property type="evidence" value="ECO:0000353"/>
    <property type="project" value="UniProtKB"/>
</dbReference>
<dbReference type="GO" id="GO:0016230">
    <property type="term" value="F:sphingomyelin phosphodiesterase activator activity"/>
    <property type="evidence" value="ECO:0007669"/>
    <property type="project" value="Ensembl"/>
</dbReference>
<dbReference type="GO" id="GO:0034599">
    <property type="term" value="P:cellular response to oxidative stress"/>
    <property type="evidence" value="ECO:0007669"/>
    <property type="project" value="Ensembl"/>
</dbReference>
<dbReference type="GO" id="GO:0071346">
    <property type="term" value="P:cellular response to type II interferon"/>
    <property type="evidence" value="ECO:0000314"/>
    <property type="project" value="MGI"/>
</dbReference>
<dbReference type="GO" id="GO:1903575">
    <property type="term" value="P:cornified envelope assembly"/>
    <property type="evidence" value="ECO:0007669"/>
    <property type="project" value="Ensembl"/>
</dbReference>
<dbReference type="GO" id="GO:0006886">
    <property type="term" value="P:intracellular protein transport"/>
    <property type="evidence" value="ECO:0007669"/>
    <property type="project" value="InterPro"/>
</dbReference>
<dbReference type="GO" id="GO:0060291">
    <property type="term" value="P:long-term synaptic potentiation"/>
    <property type="evidence" value="ECO:0007669"/>
    <property type="project" value="Ensembl"/>
</dbReference>
<dbReference type="GO" id="GO:0045785">
    <property type="term" value="P:positive regulation of cell adhesion"/>
    <property type="evidence" value="ECO:0007669"/>
    <property type="project" value="Ensembl"/>
</dbReference>
<dbReference type="GO" id="GO:0030335">
    <property type="term" value="P:positive regulation of cell migration"/>
    <property type="evidence" value="ECO:0007669"/>
    <property type="project" value="Ensembl"/>
</dbReference>
<dbReference type="GO" id="GO:0008284">
    <property type="term" value="P:positive regulation of cell population proliferation"/>
    <property type="evidence" value="ECO:0007669"/>
    <property type="project" value="Ensembl"/>
</dbReference>
<dbReference type="GO" id="GO:0050921">
    <property type="term" value="P:positive regulation of chemotaxis"/>
    <property type="evidence" value="ECO:0007669"/>
    <property type="project" value="Ensembl"/>
</dbReference>
<dbReference type="GO" id="GO:0043311">
    <property type="term" value="P:positive regulation of eosinophil degranulation"/>
    <property type="evidence" value="ECO:0007669"/>
    <property type="project" value="Ensembl"/>
</dbReference>
<dbReference type="GO" id="GO:0002639">
    <property type="term" value="P:positive regulation of immunoglobulin production"/>
    <property type="evidence" value="ECO:0007669"/>
    <property type="project" value="Ensembl"/>
</dbReference>
<dbReference type="GO" id="GO:0035774">
    <property type="term" value="P:positive regulation of insulin secretion involved in cellular response to glucose stimulus"/>
    <property type="evidence" value="ECO:0007669"/>
    <property type="project" value="Ensembl"/>
</dbReference>
<dbReference type="GO" id="GO:2000010">
    <property type="term" value="P:positive regulation of protein localization to cell surface"/>
    <property type="evidence" value="ECO:0007669"/>
    <property type="project" value="Ensembl"/>
</dbReference>
<dbReference type="GO" id="GO:1903078">
    <property type="term" value="P:positive regulation of protein localization to plasma membrane"/>
    <property type="evidence" value="ECO:0007669"/>
    <property type="project" value="Ensembl"/>
</dbReference>
<dbReference type="GO" id="GO:0034394">
    <property type="term" value="P:protein localization to cell surface"/>
    <property type="evidence" value="ECO:0000250"/>
    <property type="project" value="UniProtKB"/>
</dbReference>
<dbReference type="GO" id="GO:1902041">
    <property type="term" value="P:regulation of extrinsic apoptotic signaling pathway via death domain receptors"/>
    <property type="evidence" value="ECO:0007669"/>
    <property type="project" value="Ensembl"/>
</dbReference>
<dbReference type="GO" id="GO:0099072">
    <property type="term" value="P:regulation of postsynaptic membrane neurotransmitter receptor levels"/>
    <property type="evidence" value="ECO:0000314"/>
    <property type="project" value="SynGO"/>
</dbReference>
<dbReference type="GO" id="GO:0007605">
    <property type="term" value="P:sensory perception of sound"/>
    <property type="evidence" value="ECO:0000250"/>
    <property type="project" value="UniProtKB"/>
</dbReference>
<dbReference type="GO" id="GO:0035493">
    <property type="term" value="P:SNARE complex assembly"/>
    <property type="evidence" value="ECO:0000314"/>
    <property type="project" value="BHF-UCL"/>
</dbReference>
<dbReference type="GO" id="GO:0016079">
    <property type="term" value="P:synaptic vesicle exocytosis"/>
    <property type="evidence" value="ECO:0000304"/>
    <property type="project" value="MGI"/>
</dbReference>
<dbReference type="CDD" id="cd00179">
    <property type="entry name" value="SynN"/>
    <property type="match status" value="1"/>
</dbReference>
<dbReference type="FunFam" id="1.20.5.110:FF:000045">
    <property type="entry name" value="Syntaxin 4"/>
    <property type="match status" value="1"/>
</dbReference>
<dbReference type="FunFam" id="1.20.58.70:FF:000011">
    <property type="entry name" value="Syntaxin 4"/>
    <property type="match status" value="1"/>
</dbReference>
<dbReference type="Gene3D" id="1.20.5.110">
    <property type="match status" value="1"/>
</dbReference>
<dbReference type="Gene3D" id="1.20.58.70">
    <property type="match status" value="1"/>
</dbReference>
<dbReference type="InterPro" id="IPR010989">
    <property type="entry name" value="SNARE"/>
</dbReference>
<dbReference type="InterPro" id="IPR045242">
    <property type="entry name" value="Syntaxin"/>
</dbReference>
<dbReference type="InterPro" id="IPR006012">
    <property type="entry name" value="Syntaxin/epimorphin_CS"/>
</dbReference>
<dbReference type="InterPro" id="IPR006011">
    <property type="entry name" value="Syntaxin_N"/>
</dbReference>
<dbReference type="InterPro" id="IPR000727">
    <property type="entry name" value="T_SNARE_dom"/>
</dbReference>
<dbReference type="PANTHER" id="PTHR19957">
    <property type="entry name" value="SYNTAXIN"/>
    <property type="match status" value="1"/>
</dbReference>
<dbReference type="PANTHER" id="PTHR19957:SF97">
    <property type="entry name" value="SYNTAXIN-4"/>
    <property type="match status" value="1"/>
</dbReference>
<dbReference type="Pfam" id="PF05739">
    <property type="entry name" value="SNARE"/>
    <property type="match status" value="1"/>
</dbReference>
<dbReference type="Pfam" id="PF00804">
    <property type="entry name" value="Syntaxin"/>
    <property type="match status" value="1"/>
</dbReference>
<dbReference type="SMART" id="SM00503">
    <property type="entry name" value="SynN"/>
    <property type="match status" value="1"/>
</dbReference>
<dbReference type="SMART" id="SM00397">
    <property type="entry name" value="t_SNARE"/>
    <property type="match status" value="1"/>
</dbReference>
<dbReference type="SUPFAM" id="SSF47661">
    <property type="entry name" value="t-snare proteins"/>
    <property type="match status" value="1"/>
</dbReference>
<dbReference type="PROSITE" id="PS00914">
    <property type="entry name" value="SYNTAXIN"/>
    <property type="match status" value="1"/>
</dbReference>
<dbReference type="PROSITE" id="PS50192">
    <property type="entry name" value="T_SNARE"/>
    <property type="match status" value="1"/>
</dbReference>